<feature type="chain" id="PRO_0000101827" description="Receptor expression-enhancing protein 3">
    <location>
        <begin position="1"/>
        <end position="254"/>
    </location>
</feature>
<feature type="transmembrane region" description="Helical" evidence="2">
    <location>
        <begin position="1"/>
        <end position="21"/>
    </location>
</feature>
<feature type="transmembrane region" description="Helical" evidence="2">
    <location>
        <begin position="35"/>
        <end position="55"/>
    </location>
</feature>
<feature type="transmembrane region" description="Helical" evidence="2">
    <location>
        <begin position="59"/>
        <end position="79"/>
    </location>
</feature>
<feature type="region of interest" description="Disordered" evidence="3">
    <location>
        <begin position="162"/>
        <end position="232"/>
    </location>
</feature>
<feature type="compositionally biased region" description="Acidic residues" evidence="3">
    <location>
        <begin position="198"/>
        <end position="212"/>
    </location>
</feature>
<feature type="modified residue" description="Phosphothreonine" evidence="5">
    <location>
        <position position="200"/>
    </location>
</feature>
<feature type="modified residue" description="Phosphoserine" evidence="5 6">
    <location>
        <position position="209"/>
    </location>
</feature>
<feature type="sequence conflict" description="In Ref. 2; BAB28218." evidence="4" ref="2">
    <original>V</original>
    <variation>I</variation>
    <location>
        <position position="50"/>
    </location>
</feature>
<feature type="sequence conflict" description="In Ref. 2; BAB28218." evidence="4" ref="2">
    <original>K</original>
    <variation>E</variation>
    <location>
        <position position="179"/>
    </location>
</feature>
<feature type="sequence conflict" description="In Ref. 2; BAB28218." evidence="4" ref="2">
    <original>S</original>
    <variation>F</variation>
    <location>
        <position position="222"/>
    </location>
</feature>
<feature type="sequence conflict" description="In Ref. 2; BAB28218." evidence="4" ref="2">
    <original>RK</original>
    <variation>PQ</variation>
    <location>
        <begin position="234"/>
        <end position="235"/>
    </location>
</feature>
<feature type="sequence conflict" description="In Ref. 2; BAB28218." evidence="4" ref="2">
    <original>RP</original>
    <variation>TT</variation>
    <location>
        <begin position="249"/>
        <end position="250"/>
    </location>
</feature>
<name>REEP3_MOUSE</name>
<organism>
    <name type="scientific">Mus musculus</name>
    <name type="common">Mouse</name>
    <dbReference type="NCBI Taxonomy" id="10090"/>
    <lineage>
        <taxon>Eukaryota</taxon>
        <taxon>Metazoa</taxon>
        <taxon>Chordata</taxon>
        <taxon>Craniata</taxon>
        <taxon>Vertebrata</taxon>
        <taxon>Euteleostomi</taxon>
        <taxon>Mammalia</taxon>
        <taxon>Eutheria</taxon>
        <taxon>Euarchontoglires</taxon>
        <taxon>Glires</taxon>
        <taxon>Rodentia</taxon>
        <taxon>Myomorpha</taxon>
        <taxon>Muroidea</taxon>
        <taxon>Muridae</taxon>
        <taxon>Murinae</taxon>
        <taxon>Mus</taxon>
        <taxon>Mus</taxon>
    </lineage>
</organism>
<gene>
    <name type="primary">Reep3</name>
    <name type="synonym">D10Ucla1</name>
</gene>
<evidence type="ECO:0000250" key="1"/>
<evidence type="ECO:0000255" key="2"/>
<evidence type="ECO:0000256" key="3">
    <source>
        <dbReference type="SAM" id="MobiDB-lite"/>
    </source>
</evidence>
<evidence type="ECO:0000305" key="4"/>
<evidence type="ECO:0007744" key="5">
    <source>
    </source>
</evidence>
<evidence type="ECO:0007744" key="6">
    <source>
    </source>
</evidence>
<keyword id="KW-0131">Cell cycle</keyword>
<keyword id="KW-0132">Cell division</keyword>
<keyword id="KW-0256">Endoplasmic reticulum</keyword>
<keyword id="KW-0472">Membrane</keyword>
<keyword id="KW-0493">Microtubule</keyword>
<keyword id="KW-0498">Mitosis</keyword>
<keyword id="KW-0597">Phosphoprotein</keyword>
<keyword id="KW-1185">Reference proteome</keyword>
<keyword id="KW-0812">Transmembrane</keyword>
<keyword id="KW-1133">Transmembrane helix</keyword>
<proteinExistence type="evidence at protein level"/>
<reference key="1">
    <citation type="journal article" date="2004" name="Cell">
        <title>RTP family members induce functional expression of mammalian odorant receptors.</title>
        <authorList>
            <person name="Saito H."/>
            <person name="Kubota M."/>
            <person name="Roberts R.W."/>
            <person name="Chi Q."/>
            <person name="Matsunami H."/>
        </authorList>
    </citation>
    <scope>NUCLEOTIDE SEQUENCE [MRNA]</scope>
</reference>
<reference key="2">
    <citation type="journal article" date="2005" name="Science">
        <title>The transcriptional landscape of the mammalian genome.</title>
        <authorList>
            <person name="Carninci P."/>
            <person name="Kasukawa T."/>
            <person name="Katayama S."/>
            <person name="Gough J."/>
            <person name="Frith M.C."/>
            <person name="Maeda N."/>
            <person name="Oyama R."/>
            <person name="Ravasi T."/>
            <person name="Lenhard B."/>
            <person name="Wells C."/>
            <person name="Kodzius R."/>
            <person name="Shimokawa K."/>
            <person name="Bajic V.B."/>
            <person name="Brenner S.E."/>
            <person name="Batalov S."/>
            <person name="Forrest A.R."/>
            <person name="Zavolan M."/>
            <person name="Davis M.J."/>
            <person name="Wilming L.G."/>
            <person name="Aidinis V."/>
            <person name="Allen J.E."/>
            <person name="Ambesi-Impiombato A."/>
            <person name="Apweiler R."/>
            <person name="Aturaliya R.N."/>
            <person name="Bailey T.L."/>
            <person name="Bansal M."/>
            <person name="Baxter L."/>
            <person name="Beisel K.W."/>
            <person name="Bersano T."/>
            <person name="Bono H."/>
            <person name="Chalk A.M."/>
            <person name="Chiu K.P."/>
            <person name="Choudhary V."/>
            <person name="Christoffels A."/>
            <person name="Clutterbuck D.R."/>
            <person name="Crowe M.L."/>
            <person name="Dalla E."/>
            <person name="Dalrymple B.P."/>
            <person name="de Bono B."/>
            <person name="Della Gatta G."/>
            <person name="di Bernardo D."/>
            <person name="Down T."/>
            <person name="Engstrom P."/>
            <person name="Fagiolini M."/>
            <person name="Faulkner G."/>
            <person name="Fletcher C.F."/>
            <person name="Fukushima T."/>
            <person name="Furuno M."/>
            <person name="Futaki S."/>
            <person name="Gariboldi M."/>
            <person name="Georgii-Hemming P."/>
            <person name="Gingeras T.R."/>
            <person name="Gojobori T."/>
            <person name="Green R.E."/>
            <person name="Gustincich S."/>
            <person name="Harbers M."/>
            <person name="Hayashi Y."/>
            <person name="Hensch T.K."/>
            <person name="Hirokawa N."/>
            <person name="Hill D."/>
            <person name="Huminiecki L."/>
            <person name="Iacono M."/>
            <person name="Ikeo K."/>
            <person name="Iwama A."/>
            <person name="Ishikawa T."/>
            <person name="Jakt M."/>
            <person name="Kanapin A."/>
            <person name="Katoh M."/>
            <person name="Kawasawa Y."/>
            <person name="Kelso J."/>
            <person name="Kitamura H."/>
            <person name="Kitano H."/>
            <person name="Kollias G."/>
            <person name="Krishnan S.P."/>
            <person name="Kruger A."/>
            <person name="Kummerfeld S.K."/>
            <person name="Kurochkin I.V."/>
            <person name="Lareau L.F."/>
            <person name="Lazarevic D."/>
            <person name="Lipovich L."/>
            <person name="Liu J."/>
            <person name="Liuni S."/>
            <person name="McWilliam S."/>
            <person name="Madan Babu M."/>
            <person name="Madera M."/>
            <person name="Marchionni L."/>
            <person name="Matsuda H."/>
            <person name="Matsuzawa S."/>
            <person name="Miki H."/>
            <person name="Mignone F."/>
            <person name="Miyake S."/>
            <person name="Morris K."/>
            <person name="Mottagui-Tabar S."/>
            <person name="Mulder N."/>
            <person name="Nakano N."/>
            <person name="Nakauchi H."/>
            <person name="Ng P."/>
            <person name="Nilsson R."/>
            <person name="Nishiguchi S."/>
            <person name="Nishikawa S."/>
            <person name="Nori F."/>
            <person name="Ohara O."/>
            <person name="Okazaki Y."/>
            <person name="Orlando V."/>
            <person name="Pang K.C."/>
            <person name="Pavan W.J."/>
            <person name="Pavesi G."/>
            <person name="Pesole G."/>
            <person name="Petrovsky N."/>
            <person name="Piazza S."/>
            <person name="Reed J."/>
            <person name="Reid J.F."/>
            <person name="Ring B.Z."/>
            <person name="Ringwald M."/>
            <person name="Rost B."/>
            <person name="Ruan Y."/>
            <person name="Salzberg S.L."/>
            <person name="Sandelin A."/>
            <person name="Schneider C."/>
            <person name="Schoenbach C."/>
            <person name="Sekiguchi K."/>
            <person name="Semple C.A."/>
            <person name="Seno S."/>
            <person name="Sessa L."/>
            <person name="Sheng Y."/>
            <person name="Shibata Y."/>
            <person name="Shimada H."/>
            <person name="Shimada K."/>
            <person name="Silva D."/>
            <person name="Sinclair B."/>
            <person name="Sperling S."/>
            <person name="Stupka E."/>
            <person name="Sugiura K."/>
            <person name="Sultana R."/>
            <person name="Takenaka Y."/>
            <person name="Taki K."/>
            <person name="Tammoja K."/>
            <person name="Tan S.L."/>
            <person name="Tang S."/>
            <person name="Taylor M.S."/>
            <person name="Tegner J."/>
            <person name="Teichmann S.A."/>
            <person name="Ueda H.R."/>
            <person name="van Nimwegen E."/>
            <person name="Verardo R."/>
            <person name="Wei C.L."/>
            <person name="Yagi K."/>
            <person name="Yamanishi H."/>
            <person name="Zabarovsky E."/>
            <person name="Zhu S."/>
            <person name="Zimmer A."/>
            <person name="Hide W."/>
            <person name="Bult C."/>
            <person name="Grimmond S.M."/>
            <person name="Teasdale R.D."/>
            <person name="Liu E.T."/>
            <person name="Brusic V."/>
            <person name="Quackenbush J."/>
            <person name="Wahlestedt C."/>
            <person name="Mattick J.S."/>
            <person name="Hume D.A."/>
            <person name="Kai C."/>
            <person name="Sasaki D."/>
            <person name="Tomaru Y."/>
            <person name="Fukuda S."/>
            <person name="Kanamori-Katayama M."/>
            <person name="Suzuki M."/>
            <person name="Aoki J."/>
            <person name="Arakawa T."/>
            <person name="Iida J."/>
            <person name="Imamura K."/>
            <person name="Itoh M."/>
            <person name="Kato T."/>
            <person name="Kawaji H."/>
            <person name="Kawagashira N."/>
            <person name="Kawashima T."/>
            <person name="Kojima M."/>
            <person name="Kondo S."/>
            <person name="Konno H."/>
            <person name="Nakano K."/>
            <person name="Ninomiya N."/>
            <person name="Nishio T."/>
            <person name="Okada M."/>
            <person name="Plessy C."/>
            <person name="Shibata K."/>
            <person name="Shiraki T."/>
            <person name="Suzuki S."/>
            <person name="Tagami M."/>
            <person name="Waki K."/>
            <person name="Watahiki A."/>
            <person name="Okamura-Oho Y."/>
            <person name="Suzuki H."/>
            <person name="Kawai J."/>
            <person name="Hayashizaki Y."/>
        </authorList>
    </citation>
    <scope>NUCLEOTIDE SEQUENCE [LARGE SCALE MRNA]</scope>
    <source>
        <strain>C57BL/6J</strain>
        <tissue>Corpus striatum</tissue>
        <tissue>Embryo</tissue>
        <tissue>Small intestine</tissue>
        <tissue>Spinal cord</tissue>
    </source>
</reference>
<reference key="3">
    <citation type="journal article" date="2004" name="Genome Res.">
        <title>The status, quality, and expansion of the NIH full-length cDNA project: the Mammalian Gene Collection (MGC).</title>
        <authorList>
            <consortium name="The MGC Project Team"/>
        </authorList>
    </citation>
    <scope>NUCLEOTIDE SEQUENCE [LARGE SCALE MRNA]</scope>
    <source>
        <strain>FVB/N</strain>
        <tissue>Mammary tumor</tissue>
    </source>
</reference>
<reference key="4">
    <citation type="journal article" date="2007" name="Proc. Natl. Acad. Sci. U.S.A.">
        <title>Large-scale phosphorylation analysis of mouse liver.</title>
        <authorList>
            <person name="Villen J."/>
            <person name="Beausoleil S.A."/>
            <person name="Gerber S.A."/>
            <person name="Gygi S.P."/>
        </authorList>
    </citation>
    <scope>PHOSPHORYLATION [LARGE SCALE ANALYSIS] AT THR-200 AND SER-209</scope>
    <scope>IDENTIFICATION BY MASS SPECTROMETRY [LARGE SCALE ANALYSIS]</scope>
    <source>
        <tissue>Liver</tissue>
    </source>
</reference>
<reference key="5">
    <citation type="journal article" date="2009" name="Immunity">
        <title>The phagosomal proteome in interferon-gamma-activated macrophages.</title>
        <authorList>
            <person name="Trost M."/>
            <person name="English L."/>
            <person name="Lemieux S."/>
            <person name="Courcelles M."/>
            <person name="Desjardins M."/>
            <person name="Thibault P."/>
        </authorList>
    </citation>
    <scope>IDENTIFICATION BY MASS SPECTROMETRY [LARGE SCALE ANALYSIS]</scope>
</reference>
<reference key="6">
    <citation type="journal article" date="2010" name="Cell">
        <title>A tissue-specific atlas of mouse protein phosphorylation and expression.</title>
        <authorList>
            <person name="Huttlin E.L."/>
            <person name="Jedrychowski M.P."/>
            <person name="Elias J.E."/>
            <person name="Goswami T."/>
            <person name="Rad R."/>
            <person name="Beausoleil S.A."/>
            <person name="Villen J."/>
            <person name="Haas W."/>
            <person name="Sowa M.E."/>
            <person name="Gygi S.P."/>
        </authorList>
    </citation>
    <scope>PHOSPHORYLATION [LARGE SCALE ANALYSIS] AT SER-209</scope>
    <scope>IDENTIFICATION BY MASS SPECTROMETRY [LARGE SCALE ANALYSIS]</scope>
    <source>
        <tissue>Brain</tissue>
        <tissue>Kidney</tissue>
        <tissue>Lung</tissue>
        <tissue>Pancreas</tissue>
        <tissue>Spleen</tissue>
    </source>
</reference>
<comment type="function">
    <text evidence="1">Microtubule-binding protein required to ensure proper cell division and nuclear envelope reassembly by sequestering the endoplasmic reticulum away from chromosomes during mitosis. Probably acts by clearing the endoplasmic reticulum membrane from metaphase chromosomes (By similarity).</text>
</comment>
<comment type="subcellular location">
    <subcellularLocation>
        <location evidence="1">Endoplasmic reticulum membrane</location>
        <topology evidence="1">Multi-pass membrane protein</topology>
    </subcellularLocation>
</comment>
<comment type="similarity">
    <text evidence="4">Belongs to the DP1 family.</text>
</comment>
<comment type="sequence caution" evidence="4">
    <conflict type="erroneous termination">
        <sequence resource="EMBL-CDS" id="BAB25434"/>
    </conflict>
    <text>Truncated C-terminus.</text>
</comment>
<protein>
    <recommendedName>
        <fullName>Receptor expression-enhancing protein 3</fullName>
    </recommendedName>
</protein>
<accession>Q99KK1</accession>
<accession>Q9CZM8</accession>
<accession>Q9D8G3</accession>
<dbReference type="EMBL" id="AY562231">
    <property type="protein sequence ID" value="AAT70676.1"/>
    <property type="molecule type" value="mRNA"/>
</dbReference>
<dbReference type="EMBL" id="AK008058">
    <property type="protein sequence ID" value="BAB25434.1"/>
    <property type="status" value="ALT_SEQ"/>
    <property type="molecule type" value="mRNA"/>
</dbReference>
<dbReference type="EMBL" id="AK012403">
    <property type="protein sequence ID" value="BAB28218.1"/>
    <property type="molecule type" value="mRNA"/>
</dbReference>
<dbReference type="EMBL" id="AK047728">
    <property type="protein sequence ID" value="BAC33141.1"/>
    <property type="molecule type" value="mRNA"/>
</dbReference>
<dbReference type="EMBL" id="AK079649">
    <property type="protein sequence ID" value="BAC37714.1"/>
    <property type="molecule type" value="mRNA"/>
</dbReference>
<dbReference type="EMBL" id="BC004607">
    <property type="protein sequence ID" value="AAH04607.1"/>
    <property type="molecule type" value="mRNA"/>
</dbReference>
<dbReference type="CCDS" id="CCDS35926.1"/>
<dbReference type="RefSeq" id="NP_848721.1">
    <property type="nucleotide sequence ID" value="NM_178606.6"/>
</dbReference>
<dbReference type="BioGRID" id="205824">
    <property type="interactions" value="2"/>
</dbReference>
<dbReference type="FunCoup" id="Q99KK1">
    <property type="interactions" value="626"/>
</dbReference>
<dbReference type="IntAct" id="Q99KK1">
    <property type="interactions" value="1"/>
</dbReference>
<dbReference type="MINT" id="Q99KK1"/>
<dbReference type="STRING" id="10090.ENSMUSP00000020023"/>
<dbReference type="GlyGen" id="Q99KK1">
    <property type="glycosylation" value="1 site"/>
</dbReference>
<dbReference type="iPTMnet" id="Q99KK1"/>
<dbReference type="PhosphoSitePlus" id="Q99KK1"/>
<dbReference type="jPOST" id="Q99KK1"/>
<dbReference type="PaxDb" id="10090-ENSMUSP00000020023"/>
<dbReference type="PeptideAtlas" id="Q99KK1"/>
<dbReference type="ProteomicsDB" id="255007"/>
<dbReference type="Pumba" id="Q99KK1"/>
<dbReference type="Antibodypedia" id="45181">
    <property type="antibodies" value="80 antibodies from 22 providers"/>
</dbReference>
<dbReference type="DNASU" id="28193"/>
<dbReference type="Ensembl" id="ENSMUST00000020023.9">
    <property type="protein sequence ID" value="ENSMUSP00000020023.8"/>
    <property type="gene ID" value="ENSMUSG00000019873.9"/>
</dbReference>
<dbReference type="GeneID" id="28193"/>
<dbReference type="KEGG" id="mmu:28193"/>
<dbReference type="UCSC" id="uc007flq.2">
    <property type="organism name" value="mouse"/>
</dbReference>
<dbReference type="AGR" id="MGI:88930"/>
<dbReference type="CTD" id="221035"/>
<dbReference type="MGI" id="MGI:88930">
    <property type="gene designation" value="Reep3"/>
</dbReference>
<dbReference type="VEuPathDB" id="HostDB:ENSMUSG00000019873"/>
<dbReference type="eggNOG" id="KOG1726">
    <property type="taxonomic scope" value="Eukaryota"/>
</dbReference>
<dbReference type="GeneTree" id="ENSGT00940000158794"/>
<dbReference type="HOGENOM" id="CLU_028431_0_1_1"/>
<dbReference type="InParanoid" id="Q99KK1"/>
<dbReference type="OMA" id="PIGQRHY"/>
<dbReference type="OrthoDB" id="434647at2759"/>
<dbReference type="PhylomeDB" id="Q99KK1"/>
<dbReference type="TreeFam" id="TF314177"/>
<dbReference type="BioGRID-ORCS" id="28193">
    <property type="hits" value="1 hit in 76 CRISPR screens"/>
</dbReference>
<dbReference type="ChiTaRS" id="Reep3">
    <property type="organism name" value="mouse"/>
</dbReference>
<dbReference type="PRO" id="PR:Q99KK1"/>
<dbReference type="Proteomes" id="UP000000589">
    <property type="component" value="Chromosome 10"/>
</dbReference>
<dbReference type="RNAct" id="Q99KK1">
    <property type="molecule type" value="protein"/>
</dbReference>
<dbReference type="Bgee" id="ENSMUSG00000019873">
    <property type="expression patterns" value="Expressed in rostral migratory stream and 262 other cell types or tissues"/>
</dbReference>
<dbReference type="ExpressionAtlas" id="Q99KK1">
    <property type="expression patterns" value="baseline and differential"/>
</dbReference>
<dbReference type="GO" id="GO:0005789">
    <property type="term" value="C:endoplasmic reticulum membrane"/>
    <property type="evidence" value="ECO:0007669"/>
    <property type="project" value="UniProtKB-SubCell"/>
</dbReference>
<dbReference type="GO" id="GO:0005874">
    <property type="term" value="C:microtubule"/>
    <property type="evidence" value="ECO:0007669"/>
    <property type="project" value="UniProtKB-KW"/>
</dbReference>
<dbReference type="GO" id="GO:0051301">
    <property type="term" value="P:cell division"/>
    <property type="evidence" value="ECO:0007669"/>
    <property type="project" value="UniProtKB-KW"/>
</dbReference>
<dbReference type="GO" id="GO:0007084">
    <property type="term" value="P:mitotic nuclear membrane reassembly"/>
    <property type="evidence" value="ECO:0000250"/>
    <property type="project" value="UniProtKB"/>
</dbReference>
<dbReference type="GO" id="GO:0006998">
    <property type="term" value="P:nuclear envelope organization"/>
    <property type="evidence" value="ECO:0000250"/>
    <property type="project" value="UniProtKB"/>
</dbReference>
<dbReference type="InterPro" id="IPR004345">
    <property type="entry name" value="TB2_DP1_HVA22"/>
</dbReference>
<dbReference type="PANTHER" id="PTHR12300">
    <property type="entry name" value="HVA22-LIKE PROTEINS"/>
    <property type="match status" value="1"/>
</dbReference>
<dbReference type="PANTHER" id="PTHR12300:SF39">
    <property type="entry name" value="RECEPTOR EXPRESSION-ENHANCING PROTEIN 3"/>
    <property type="match status" value="1"/>
</dbReference>
<dbReference type="Pfam" id="PF03134">
    <property type="entry name" value="TB2_DP1_HVA22"/>
    <property type="match status" value="1"/>
</dbReference>
<sequence>MVSWMISRAVVLVFGMLYPAYYSYKAVKTKNVKEYVRWMMYWIVFALYTVIETVADQTLAWFPLYYELKIAFVIWLLSPYTRGASLIYRKFLHPLLSSKEREIDDYIVQAKERGYETMVNFGRQGLNLAAAAAVTAAVKSQGAITERLRSFSMHDLTAIQGDEPVGHRPYQTLPEAKRKGKQATESPAYGIPLKDGSEQTDEEAEGPFSDDEMVTHKALRRSQSMKSVKTIKGRKEVRYGSLKYKVKKRPQVYF</sequence>